<dbReference type="EMBL" id="BX255931">
    <property type="protein sequence ID" value="CAK04301.1"/>
    <property type="molecule type" value="Genomic_DNA"/>
</dbReference>
<dbReference type="EMBL" id="BC095725">
    <property type="protein sequence ID" value="AAH95725.1"/>
    <property type="molecule type" value="mRNA"/>
</dbReference>
<dbReference type="RefSeq" id="NP_001018509.1">
    <property type="nucleotide sequence ID" value="NM_001020673.1"/>
</dbReference>
<dbReference type="SMR" id="Q502F0"/>
<dbReference type="GlyCosmos" id="Q502F0">
    <property type="glycosylation" value="1 site, No reported glycans"/>
</dbReference>
<dbReference type="GeneID" id="553700"/>
<dbReference type="KEGG" id="dre:553700"/>
<dbReference type="AGR" id="ZFIN:ZDB-GENE-030131-4298"/>
<dbReference type="CTD" id="553700"/>
<dbReference type="ZFIN" id="ZDB-GENE-030131-4298">
    <property type="gene designation" value="creb3l3a"/>
</dbReference>
<dbReference type="OrthoDB" id="674948at2759"/>
<dbReference type="PhylomeDB" id="Q502F0"/>
<dbReference type="Proteomes" id="UP000000437">
    <property type="component" value="Alternate scaffold 22"/>
</dbReference>
<dbReference type="Proteomes" id="UP000000437">
    <property type="component" value="Chromosome 22"/>
</dbReference>
<dbReference type="GO" id="GO:0005789">
    <property type="term" value="C:endoplasmic reticulum membrane"/>
    <property type="evidence" value="ECO:0007669"/>
    <property type="project" value="UniProtKB-SubCell"/>
</dbReference>
<dbReference type="GO" id="GO:0005634">
    <property type="term" value="C:nucleus"/>
    <property type="evidence" value="ECO:0000318"/>
    <property type="project" value="GO_Central"/>
</dbReference>
<dbReference type="GO" id="GO:0000981">
    <property type="term" value="F:DNA-binding transcription factor activity, RNA polymerase II-specific"/>
    <property type="evidence" value="ECO:0000318"/>
    <property type="project" value="GO_Central"/>
</dbReference>
<dbReference type="GO" id="GO:0000978">
    <property type="term" value="F:RNA polymerase II cis-regulatory region sequence-specific DNA binding"/>
    <property type="evidence" value="ECO:0000318"/>
    <property type="project" value="GO_Central"/>
</dbReference>
<dbReference type="GO" id="GO:0006357">
    <property type="term" value="P:regulation of transcription by RNA polymerase II"/>
    <property type="evidence" value="ECO:0000318"/>
    <property type="project" value="GO_Central"/>
</dbReference>
<dbReference type="CDD" id="cd14689">
    <property type="entry name" value="bZIP_CREB3"/>
    <property type="match status" value="1"/>
</dbReference>
<dbReference type="FunFam" id="1.20.5.170:FF:000042">
    <property type="entry name" value="Cyclic AMP-responsive element-binding protein 3-like protein 3"/>
    <property type="match status" value="1"/>
</dbReference>
<dbReference type="Gene3D" id="1.20.5.170">
    <property type="match status" value="1"/>
</dbReference>
<dbReference type="InterPro" id="IPR004827">
    <property type="entry name" value="bZIP"/>
</dbReference>
<dbReference type="InterPro" id="IPR046347">
    <property type="entry name" value="bZIP_sf"/>
</dbReference>
<dbReference type="InterPro" id="IPR051381">
    <property type="entry name" value="CREB_ATF_subfamily"/>
</dbReference>
<dbReference type="PANTHER" id="PTHR45996">
    <property type="entry name" value="AGAP001464-PB"/>
    <property type="match status" value="1"/>
</dbReference>
<dbReference type="PANTHER" id="PTHR45996:SF1">
    <property type="entry name" value="CYCLIC AMP-RESPONSIVE ELEMENT-BINDING PROTEIN 3-LIKE PROTEIN 3"/>
    <property type="match status" value="1"/>
</dbReference>
<dbReference type="Pfam" id="PF00170">
    <property type="entry name" value="bZIP_1"/>
    <property type="match status" value="1"/>
</dbReference>
<dbReference type="SMART" id="SM00338">
    <property type="entry name" value="BRLZ"/>
    <property type="match status" value="1"/>
</dbReference>
<dbReference type="SUPFAM" id="SSF57959">
    <property type="entry name" value="Leucine zipper domain"/>
    <property type="match status" value="1"/>
</dbReference>
<dbReference type="PROSITE" id="PS50217">
    <property type="entry name" value="BZIP"/>
    <property type="match status" value="1"/>
</dbReference>
<dbReference type="PROSITE" id="PS00036">
    <property type="entry name" value="BZIP_BASIC"/>
    <property type="match status" value="1"/>
</dbReference>
<sequence length="428" mass="48246">MENYSDQGGDGIELLDLLFDKNDGILRYENMGQQNNQLWPVQDPHMMMPPQGNEDFFNALIGGSDSVSGSPVWSPSPSDSGISEDPHSDHIDSPPPNASPPMEPHIVVSQTQHSLNINFPFDFNGWETGFLPDQAGGTQCASETPQAQPATGFPLTVKDLLLSGTPETAAKVSQQSYQELILTEDEKRLLAKEGMTLPNQFPLTKYEERILKKIRRKIRNKQSAQESRKKKKEYIDGLESRMAACSAHNHELQRKVFQLEKCNISLMEQLRRLQALVMNGSNKPVQAGTCVLVLLLSFTLILLPNLKPFTDTKVSQHGDFSPMRVQSRSLHNLQSSRVLRNLDHPYSMTENAKILPRFPEDKTMEEIASLLGRLHRRPQFTEYDPESHNHSFDQHDEHHHGDPITGHVATVTLNPRRGSRRSPHADDM</sequence>
<reference key="1">
    <citation type="journal article" date="2013" name="Nature">
        <title>The zebrafish reference genome sequence and its relationship to the human genome.</title>
        <authorList>
            <person name="Howe K."/>
            <person name="Clark M.D."/>
            <person name="Torroja C.F."/>
            <person name="Torrance J."/>
            <person name="Berthelot C."/>
            <person name="Muffato M."/>
            <person name="Collins J.E."/>
            <person name="Humphray S."/>
            <person name="McLaren K."/>
            <person name="Matthews L."/>
            <person name="McLaren S."/>
            <person name="Sealy I."/>
            <person name="Caccamo M."/>
            <person name="Churcher C."/>
            <person name="Scott C."/>
            <person name="Barrett J.C."/>
            <person name="Koch R."/>
            <person name="Rauch G.J."/>
            <person name="White S."/>
            <person name="Chow W."/>
            <person name="Kilian B."/>
            <person name="Quintais L.T."/>
            <person name="Guerra-Assuncao J.A."/>
            <person name="Zhou Y."/>
            <person name="Gu Y."/>
            <person name="Yen J."/>
            <person name="Vogel J.H."/>
            <person name="Eyre T."/>
            <person name="Redmond S."/>
            <person name="Banerjee R."/>
            <person name="Chi J."/>
            <person name="Fu B."/>
            <person name="Langley E."/>
            <person name="Maguire S.F."/>
            <person name="Laird G.K."/>
            <person name="Lloyd D."/>
            <person name="Kenyon E."/>
            <person name="Donaldson S."/>
            <person name="Sehra H."/>
            <person name="Almeida-King J."/>
            <person name="Loveland J."/>
            <person name="Trevanion S."/>
            <person name="Jones M."/>
            <person name="Quail M."/>
            <person name="Willey D."/>
            <person name="Hunt A."/>
            <person name="Burton J."/>
            <person name="Sims S."/>
            <person name="McLay K."/>
            <person name="Plumb B."/>
            <person name="Davis J."/>
            <person name="Clee C."/>
            <person name="Oliver K."/>
            <person name="Clark R."/>
            <person name="Riddle C."/>
            <person name="Elliot D."/>
            <person name="Threadgold G."/>
            <person name="Harden G."/>
            <person name="Ware D."/>
            <person name="Begum S."/>
            <person name="Mortimore B."/>
            <person name="Kerry G."/>
            <person name="Heath P."/>
            <person name="Phillimore B."/>
            <person name="Tracey A."/>
            <person name="Corby N."/>
            <person name="Dunn M."/>
            <person name="Johnson C."/>
            <person name="Wood J."/>
            <person name="Clark S."/>
            <person name="Pelan S."/>
            <person name="Griffiths G."/>
            <person name="Smith M."/>
            <person name="Glithero R."/>
            <person name="Howden P."/>
            <person name="Barker N."/>
            <person name="Lloyd C."/>
            <person name="Stevens C."/>
            <person name="Harley J."/>
            <person name="Holt K."/>
            <person name="Panagiotidis G."/>
            <person name="Lovell J."/>
            <person name="Beasley H."/>
            <person name="Henderson C."/>
            <person name="Gordon D."/>
            <person name="Auger K."/>
            <person name="Wright D."/>
            <person name="Collins J."/>
            <person name="Raisen C."/>
            <person name="Dyer L."/>
            <person name="Leung K."/>
            <person name="Robertson L."/>
            <person name="Ambridge K."/>
            <person name="Leongamornlert D."/>
            <person name="McGuire S."/>
            <person name="Gilderthorp R."/>
            <person name="Griffiths C."/>
            <person name="Manthravadi D."/>
            <person name="Nichol S."/>
            <person name="Barker G."/>
            <person name="Whitehead S."/>
            <person name="Kay M."/>
            <person name="Brown J."/>
            <person name="Murnane C."/>
            <person name="Gray E."/>
            <person name="Humphries M."/>
            <person name="Sycamore N."/>
            <person name="Barker D."/>
            <person name="Saunders D."/>
            <person name="Wallis J."/>
            <person name="Babbage A."/>
            <person name="Hammond S."/>
            <person name="Mashreghi-Mohammadi M."/>
            <person name="Barr L."/>
            <person name="Martin S."/>
            <person name="Wray P."/>
            <person name="Ellington A."/>
            <person name="Matthews N."/>
            <person name="Ellwood M."/>
            <person name="Woodmansey R."/>
            <person name="Clark G."/>
            <person name="Cooper J."/>
            <person name="Tromans A."/>
            <person name="Grafham D."/>
            <person name="Skuce C."/>
            <person name="Pandian R."/>
            <person name="Andrews R."/>
            <person name="Harrison E."/>
            <person name="Kimberley A."/>
            <person name="Garnett J."/>
            <person name="Fosker N."/>
            <person name="Hall R."/>
            <person name="Garner P."/>
            <person name="Kelly D."/>
            <person name="Bird C."/>
            <person name="Palmer S."/>
            <person name="Gehring I."/>
            <person name="Berger A."/>
            <person name="Dooley C.M."/>
            <person name="Ersan-Urun Z."/>
            <person name="Eser C."/>
            <person name="Geiger H."/>
            <person name="Geisler M."/>
            <person name="Karotki L."/>
            <person name="Kirn A."/>
            <person name="Konantz J."/>
            <person name="Konantz M."/>
            <person name="Oberlander M."/>
            <person name="Rudolph-Geiger S."/>
            <person name="Teucke M."/>
            <person name="Lanz C."/>
            <person name="Raddatz G."/>
            <person name="Osoegawa K."/>
            <person name="Zhu B."/>
            <person name="Rapp A."/>
            <person name="Widaa S."/>
            <person name="Langford C."/>
            <person name="Yang F."/>
            <person name="Schuster S.C."/>
            <person name="Carter N.P."/>
            <person name="Harrow J."/>
            <person name="Ning Z."/>
            <person name="Herrero J."/>
            <person name="Searle S.M."/>
            <person name="Enright A."/>
            <person name="Geisler R."/>
            <person name="Plasterk R.H."/>
            <person name="Lee C."/>
            <person name="Westerfield M."/>
            <person name="de Jong P.J."/>
            <person name="Zon L.I."/>
            <person name="Postlethwait J.H."/>
            <person name="Nusslein-Volhard C."/>
            <person name="Hubbard T.J."/>
            <person name="Roest Crollius H."/>
            <person name="Rogers J."/>
            <person name="Stemple D.L."/>
        </authorList>
    </citation>
    <scope>NUCLEOTIDE SEQUENCE [LARGE SCALE GENOMIC DNA]</scope>
    <source>
        <strain>Tuebingen</strain>
    </source>
</reference>
<reference key="2">
    <citation type="submission" date="2005-05" db="EMBL/GenBank/DDBJ databases">
        <authorList>
            <consortium name="NIH - Zebrafish Gene Collection (ZGC) project"/>
        </authorList>
    </citation>
    <scope>NUCLEOTIDE SEQUENCE [LARGE SCALE MRNA]</scope>
    <source>
        <tissue>Liver</tissue>
    </source>
</reference>
<feature type="chain" id="PRO_0000288077" description="Cyclic AMP-responsive element-binding protein 3-like protein 3-A">
    <location>
        <begin position="1"/>
        <end position="428"/>
    </location>
</feature>
<feature type="chain" id="PRO_0000296218" description="Processed cyclic AMP-responsive element-binding protein 3-like protein 3-A">
    <location>
        <begin position="1"/>
        <end status="unknown"/>
    </location>
</feature>
<feature type="topological domain" description="Cytoplasmic" evidence="4">
    <location>
        <begin position="1"/>
        <end position="286"/>
    </location>
</feature>
<feature type="transmembrane region" description="Helical; Signal-anchor for type II membrane protein" evidence="4">
    <location>
        <begin position="287"/>
        <end position="303"/>
    </location>
</feature>
<feature type="topological domain" description="Lumenal" evidence="4">
    <location>
        <begin position="304"/>
        <end position="428"/>
    </location>
</feature>
<feature type="domain" description="bZIP" evidence="5">
    <location>
        <begin position="210"/>
        <end position="273"/>
    </location>
</feature>
<feature type="region of interest" description="Disordered" evidence="6">
    <location>
        <begin position="67"/>
        <end position="104"/>
    </location>
</feature>
<feature type="region of interest" description="Basic motif" evidence="5">
    <location>
        <begin position="212"/>
        <end position="241"/>
    </location>
</feature>
<feature type="region of interest" description="Leucine-zipper" evidence="5">
    <location>
        <begin position="252"/>
        <end position="273"/>
    </location>
</feature>
<feature type="region of interest" description="Disordered" evidence="6">
    <location>
        <begin position="381"/>
        <end position="428"/>
    </location>
</feature>
<feature type="compositionally biased region" description="Low complexity" evidence="6">
    <location>
        <begin position="67"/>
        <end position="83"/>
    </location>
</feature>
<feature type="compositionally biased region" description="Pro residues" evidence="6">
    <location>
        <begin position="93"/>
        <end position="103"/>
    </location>
</feature>
<feature type="compositionally biased region" description="Basic and acidic residues" evidence="6">
    <location>
        <begin position="385"/>
        <end position="402"/>
    </location>
</feature>
<feature type="site" description="Cleavage; by PS1" evidence="1">
    <location>
        <begin position="330"/>
        <end position="331"/>
    </location>
</feature>
<feature type="glycosylation site" description="N-linked (GlcNAc...) asparagine" evidence="4">
    <location>
        <position position="389"/>
    </location>
</feature>
<gene>
    <name type="primary">creb3l3a</name>
    <name type="ORF">si:ch211-195b2</name>
    <name type="ORF">zgc:112279</name>
</gene>
<evidence type="ECO:0000250" key="1"/>
<evidence type="ECO:0000250" key="2">
    <source>
        <dbReference type="UniProtKB" id="Q68CJ9"/>
    </source>
</evidence>
<evidence type="ECO:0000250" key="3">
    <source>
        <dbReference type="UniProtKB" id="Q91XE9"/>
    </source>
</evidence>
<evidence type="ECO:0000255" key="4"/>
<evidence type="ECO:0000255" key="5">
    <source>
        <dbReference type="PROSITE-ProRule" id="PRU00978"/>
    </source>
</evidence>
<evidence type="ECO:0000256" key="6">
    <source>
        <dbReference type="SAM" id="MobiDB-lite"/>
    </source>
</evidence>
<evidence type="ECO:0000305" key="7"/>
<keyword id="KW-0010">Activator</keyword>
<keyword id="KW-0238">DNA-binding</keyword>
<keyword id="KW-0256">Endoplasmic reticulum</keyword>
<keyword id="KW-0325">Glycoprotein</keyword>
<keyword id="KW-0472">Membrane</keyword>
<keyword id="KW-0539">Nucleus</keyword>
<keyword id="KW-1185">Reference proteome</keyword>
<keyword id="KW-0735">Signal-anchor</keyword>
<keyword id="KW-0804">Transcription</keyword>
<keyword id="KW-0805">Transcription regulation</keyword>
<keyword id="KW-0812">Transmembrane</keyword>
<keyword id="KW-1133">Transmembrane helix</keyword>
<proteinExistence type="evidence at transcript level"/>
<comment type="function">
    <text evidence="1 3">Transcriptional activator. Binds the cAMP response element (CRE). Activates transcription through box-B element and CRE. Seems to function synergistically with atf6 (By similarity). Regulates FGF21 transcription (By similarity).</text>
</comment>
<comment type="subunit">
    <text evidence="2">Binds DNA as a dimer.</text>
</comment>
<comment type="subcellular location">
    <subcellularLocation>
        <location evidence="2">Endoplasmic reticulum membrane</location>
        <topology evidence="2">Single-pass type II membrane protein</topology>
    </subcellularLocation>
</comment>
<comment type="subcellular location">
    <molecule>Processed cyclic AMP-responsive element-binding protein 3-like protein 3-A</molecule>
    <subcellularLocation>
        <location evidence="2">Nucleus</location>
    </subcellularLocation>
</comment>
<comment type="PTM">
    <text evidence="1">Controlled by regulated intramembrane proteolysis (RIP). A fragment containing the cytoplasmic transcription factor domain is released by proteolysis. The cleavage seems to be performed sequentially by site-1 and site-2 proteases (By similarity).</text>
</comment>
<comment type="similarity">
    <text evidence="7">Belongs to the bZIP family. ATF subfamily.</text>
</comment>
<accession>Q502F0</accession>
<organism>
    <name type="scientific">Danio rerio</name>
    <name type="common">Zebrafish</name>
    <name type="synonym">Brachydanio rerio</name>
    <dbReference type="NCBI Taxonomy" id="7955"/>
    <lineage>
        <taxon>Eukaryota</taxon>
        <taxon>Metazoa</taxon>
        <taxon>Chordata</taxon>
        <taxon>Craniata</taxon>
        <taxon>Vertebrata</taxon>
        <taxon>Euteleostomi</taxon>
        <taxon>Actinopterygii</taxon>
        <taxon>Neopterygii</taxon>
        <taxon>Teleostei</taxon>
        <taxon>Ostariophysi</taxon>
        <taxon>Cypriniformes</taxon>
        <taxon>Danionidae</taxon>
        <taxon>Danioninae</taxon>
        <taxon>Danio</taxon>
    </lineage>
</organism>
<name>CR3LA_DANRE</name>
<protein>
    <recommendedName>
        <fullName>Cyclic AMP-responsive element-binding protein 3-like protein 3-A</fullName>
        <shortName>cAMP-responsive element-binding protein 3-like protein 3-A</shortName>
    </recommendedName>
    <component>
        <recommendedName>
            <fullName>Processed cyclic AMP-responsive element-binding protein 3-like protein 3-A</fullName>
        </recommendedName>
    </component>
</protein>